<reference key="1">
    <citation type="journal article" date="1999" name="Mar. Mamm. Sci.">
        <title>Phylogenetic relationships among the delphinid cetaceans based on full cytochrome b sequences.</title>
        <authorList>
            <person name="LeDuc R.G."/>
            <person name="Perrin W.F."/>
            <person name="Dizon A.E."/>
        </authorList>
    </citation>
    <scope>NUCLEOTIDE SEQUENCE [GENOMIC DNA]</scope>
</reference>
<proteinExistence type="inferred from homology"/>
<gene>
    <name type="primary">MT-CYB</name>
    <name type="synonym">COB</name>
    <name type="synonym">CYTB</name>
    <name type="synonym">MTCYB</name>
</gene>
<name>CYB_CEPHE</name>
<protein>
    <recommendedName>
        <fullName>Cytochrome b</fullName>
    </recommendedName>
    <alternativeName>
        <fullName>Complex III subunit 3</fullName>
    </alternativeName>
    <alternativeName>
        <fullName>Complex III subunit III</fullName>
    </alternativeName>
    <alternativeName>
        <fullName>Cytochrome b-c1 complex subunit 3</fullName>
    </alternativeName>
    <alternativeName>
        <fullName>Ubiquinol-cytochrome-c reductase complex cytochrome b subunit</fullName>
    </alternativeName>
</protein>
<sequence length="379" mass="42876">MTNIRKTHPLMKILNNAFIDLPTPSNISSWWNFGSLLGLCLIMQILTGLFLAMHYTPDTSTAFSSVAHICRDVNYGWFIRYLHANGASMFFICLYAHIGRGLYYGSYMFQETWNIGVLLLLTVMATAFVGYVLPWGQMSFWGATVITNLLSAIPYIGTTLVEWIWGGFSVDKATLTRFFAFHFILPFIITALTAVHLLFLHETGSNNPTGIPSNMDMIPFHPYYTIKDILGALFLILILLALTLFAPDLLGDPDNYTPANPLNTPAHIKPEWYFLFAYAILRSIPNKLGGVLALLLSILILIFIPMLQTSKQRSMMFRPFSQLLFWTLIADLLTLTWIGGQPVEHPYIIVGQLASILYFFLILVLMPTVSLIENKLLKW</sequence>
<dbReference type="EMBL" id="AF084071">
    <property type="protein sequence ID" value="AAD54448.1"/>
    <property type="molecule type" value="Genomic_DNA"/>
</dbReference>
<dbReference type="SMR" id="Q9TDL4"/>
<dbReference type="GO" id="GO:0005743">
    <property type="term" value="C:mitochondrial inner membrane"/>
    <property type="evidence" value="ECO:0007669"/>
    <property type="project" value="UniProtKB-SubCell"/>
</dbReference>
<dbReference type="GO" id="GO:0045275">
    <property type="term" value="C:respiratory chain complex III"/>
    <property type="evidence" value="ECO:0007669"/>
    <property type="project" value="InterPro"/>
</dbReference>
<dbReference type="GO" id="GO:0046872">
    <property type="term" value="F:metal ion binding"/>
    <property type="evidence" value="ECO:0007669"/>
    <property type="project" value="UniProtKB-KW"/>
</dbReference>
<dbReference type="GO" id="GO:0008121">
    <property type="term" value="F:ubiquinol-cytochrome-c reductase activity"/>
    <property type="evidence" value="ECO:0007669"/>
    <property type="project" value="InterPro"/>
</dbReference>
<dbReference type="GO" id="GO:0006122">
    <property type="term" value="P:mitochondrial electron transport, ubiquinol to cytochrome c"/>
    <property type="evidence" value="ECO:0007669"/>
    <property type="project" value="TreeGrafter"/>
</dbReference>
<dbReference type="CDD" id="cd00290">
    <property type="entry name" value="cytochrome_b_C"/>
    <property type="match status" value="1"/>
</dbReference>
<dbReference type="CDD" id="cd00284">
    <property type="entry name" value="Cytochrome_b_N"/>
    <property type="match status" value="1"/>
</dbReference>
<dbReference type="FunFam" id="1.20.810.10:FF:000002">
    <property type="entry name" value="Cytochrome b"/>
    <property type="match status" value="1"/>
</dbReference>
<dbReference type="Gene3D" id="1.20.810.10">
    <property type="entry name" value="Cytochrome Bc1 Complex, Chain C"/>
    <property type="match status" value="1"/>
</dbReference>
<dbReference type="InterPro" id="IPR005798">
    <property type="entry name" value="Cyt_b/b6_C"/>
</dbReference>
<dbReference type="InterPro" id="IPR036150">
    <property type="entry name" value="Cyt_b/b6_C_sf"/>
</dbReference>
<dbReference type="InterPro" id="IPR005797">
    <property type="entry name" value="Cyt_b/b6_N"/>
</dbReference>
<dbReference type="InterPro" id="IPR027387">
    <property type="entry name" value="Cytb/b6-like_sf"/>
</dbReference>
<dbReference type="InterPro" id="IPR030689">
    <property type="entry name" value="Cytochrome_b"/>
</dbReference>
<dbReference type="InterPro" id="IPR048260">
    <property type="entry name" value="Cytochrome_b_C_euk/bac"/>
</dbReference>
<dbReference type="InterPro" id="IPR048259">
    <property type="entry name" value="Cytochrome_b_N_euk/bac"/>
</dbReference>
<dbReference type="InterPro" id="IPR016174">
    <property type="entry name" value="Di-haem_cyt_TM"/>
</dbReference>
<dbReference type="PANTHER" id="PTHR19271">
    <property type="entry name" value="CYTOCHROME B"/>
    <property type="match status" value="1"/>
</dbReference>
<dbReference type="PANTHER" id="PTHR19271:SF16">
    <property type="entry name" value="CYTOCHROME B"/>
    <property type="match status" value="1"/>
</dbReference>
<dbReference type="Pfam" id="PF00032">
    <property type="entry name" value="Cytochrom_B_C"/>
    <property type="match status" value="1"/>
</dbReference>
<dbReference type="Pfam" id="PF00033">
    <property type="entry name" value="Cytochrome_B"/>
    <property type="match status" value="1"/>
</dbReference>
<dbReference type="PIRSF" id="PIRSF038885">
    <property type="entry name" value="COB"/>
    <property type="match status" value="1"/>
</dbReference>
<dbReference type="SUPFAM" id="SSF81648">
    <property type="entry name" value="a domain/subunit of cytochrome bc1 complex (Ubiquinol-cytochrome c reductase)"/>
    <property type="match status" value="1"/>
</dbReference>
<dbReference type="SUPFAM" id="SSF81342">
    <property type="entry name" value="Transmembrane di-heme cytochromes"/>
    <property type="match status" value="1"/>
</dbReference>
<dbReference type="PROSITE" id="PS51003">
    <property type="entry name" value="CYTB_CTER"/>
    <property type="match status" value="1"/>
</dbReference>
<dbReference type="PROSITE" id="PS51002">
    <property type="entry name" value="CYTB_NTER"/>
    <property type="match status" value="1"/>
</dbReference>
<accession>Q9TDL4</accession>
<feature type="chain" id="PRO_0000060749" description="Cytochrome b">
    <location>
        <begin position="1"/>
        <end position="379"/>
    </location>
</feature>
<feature type="transmembrane region" description="Helical" evidence="2">
    <location>
        <begin position="33"/>
        <end position="53"/>
    </location>
</feature>
<feature type="transmembrane region" description="Helical" evidence="2">
    <location>
        <begin position="77"/>
        <end position="98"/>
    </location>
</feature>
<feature type="transmembrane region" description="Helical" evidence="2">
    <location>
        <begin position="113"/>
        <end position="133"/>
    </location>
</feature>
<feature type="transmembrane region" description="Helical" evidence="2">
    <location>
        <begin position="178"/>
        <end position="198"/>
    </location>
</feature>
<feature type="transmembrane region" description="Helical" evidence="2">
    <location>
        <begin position="226"/>
        <end position="246"/>
    </location>
</feature>
<feature type="transmembrane region" description="Helical" evidence="2">
    <location>
        <begin position="288"/>
        <end position="308"/>
    </location>
</feature>
<feature type="transmembrane region" description="Helical" evidence="2">
    <location>
        <begin position="320"/>
        <end position="340"/>
    </location>
</feature>
<feature type="transmembrane region" description="Helical" evidence="2">
    <location>
        <begin position="347"/>
        <end position="367"/>
    </location>
</feature>
<feature type="binding site" description="axial binding residue" evidence="2">
    <location>
        <position position="83"/>
    </location>
    <ligand>
        <name>heme b</name>
        <dbReference type="ChEBI" id="CHEBI:60344"/>
        <label>b562</label>
    </ligand>
    <ligandPart>
        <name>Fe</name>
        <dbReference type="ChEBI" id="CHEBI:18248"/>
    </ligandPart>
</feature>
<feature type="binding site" description="axial binding residue" evidence="2">
    <location>
        <position position="97"/>
    </location>
    <ligand>
        <name>heme b</name>
        <dbReference type="ChEBI" id="CHEBI:60344"/>
        <label>b566</label>
    </ligand>
    <ligandPart>
        <name>Fe</name>
        <dbReference type="ChEBI" id="CHEBI:18248"/>
    </ligandPart>
</feature>
<feature type="binding site" description="axial binding residue" evidence="2">
    <location>
        <position position="182"/>
    </location>
    <ligand>
        <name>heme b</name>
        <dbReference type="ChEBI" id="CHEBI:60344"/>
        <label>b562</label>
    </ligand>
    <ligandPart>
        <name>Fe</name>
        <dbReference type="ChEBI" id="CHEBI:18248"/>
    </ligandPart>
</feature>
<feature type="binding site" description="axial binding residue" evidence="2">
    <location>
        <position position="196"/>
    </location>
    <ligand>
        <name>heme b</name>
        <dbReference type="ChEBI" id="CHEBI:60344"/>
        <label>b566</label>
    </ligand>
    <ligandPart>
        <name>Fe</name>
        <dbReference type="ChEBI" id="CHEBI:18248"/>
    </ligandPart>
</feature>
<feature type="binding site" evidence="2">
    <location>
        <position position="201"/>
    </location>
    <ligand>
        <name>a ubiquinone</name>
        <dbReference type="ChEBI" id="CHEBI:16389"/>
    </ligand>
</feature>
<keyword id="KW-0249">Electron transport</keyword>
<keyword id="KW-0349">Heme</keyword>
<keyword id="KW-0408">Iron</keyword>
<keyword id="KW-0472">Membrane</keyword>
<keyword id="KW-0479">Metal-binding</keyword>
<keyword id="KW-0496">Mitochondrion</keyword>
<keyword id="KW-0999">Mitochondrion inner membrane</keyword>
<keyword id="KW-0679">Respiratory chain</keyword>
<keyword id="KW-0812">Transmembrane</keyword>
<keyword id="KW-1133">Transmembrane helix</keyword>
<keyword id="KW-0813">Transport</keyword>
<keyword id="KW-0830">Ubiquinone</keyword>
<geneLocation type="mitochondrion"/>
<comment type="function">
    <text evidence="2">Component of the ubiquinol-cytochrome c reductase complex (complex III or cytochrome b-c1 complex) that is part of the mitochondrial respiratory chain. The b-c1 complex mediates electron transfer from ubiquinol to cytochrome c. Contributes to the generation of a proton gradient across the mitochondrial membrane that is then used for ATP synthesis.</text>
</comment>
<comment type="cofactor">
    <cofactor evidence="2">
        <name>heme b</name>
        <dbReference type="ChEBI" id="CHEBI:60344"/>
    </cofactor>
    <text evidence="2">Binds 2 heme b groups non-covalently.</text>
</comment>
<comment type="subunit">
    <text evidence="2">The cytochrome bc1 complex contains 11 subunits: 3 respiratory subunits (MT-CYB, CYC1 and UQCRFS1), 2 core proteins (UQCRC1 and UQCRC2) and 6 low-molecular weight proteins (UQCRH/QCR6, UQCRB/QCR7, UQCRQ/QCR8, UQCR10/QCR9, UQCR11/QCR10 and a cleavage product of UQCRFS1). This cytochrome bc1 complex then forms a dimer.</text>
</comment>
<comment type="subcellular location">
    <subcellularLocation>
        <location evidence="2">Mitochondrion inner membrane</location>
        <topology evidence="2">Multi-pass membrane protein</topology>
    </subcellularLocation>
</comment>
<comment type="miscellaneous">
    <text evidence="1">Heme 1 (or BL or b562) is low-potential and absorbs at about 562 nm, and heme 2 (or BH or b566) is high-potential and absorbs at about 566 nm.</text>
</comment>
<comment type="similarity">
    <text evidence="3 4">Belongs to the cytochrome b family.</text>
</comment>
<comment type="caution">
    <text evidence="2">The full-length protein contains only eight transmembrane helices, not nine as predicted by bioinformatics tools.</text>
</comment>
<organism>
    <name type="scientific">Cephalorhynchus hectori</name>
    <name type="common">Hector's dolphin</name>
    <name type="synonym">Electra hectori</name>
    <dbReference type="NCBI Taxonomy" id="37035"/>
    <lineage>
        <taxon>Eukaryota</taxon>
        <taxon>Metazoa</taxon>
        <taxon>Chordata</taxon>
        <taxon>Craniata</taxon>
        <taxon>Vertebrata</taxon>
        <taxon>Euteleostomi</taxon>
        <taxon>Mammalia</taxon>
        <taxon>Eutheria</taxon>
        <taxon>Laurasiatheria</taxon>
        <taxon>Artiodactyla</taxon>
        <taxon>Whippomorpha</taxon>
        <taxon>Cetacea</taxon>
        <taxon>Odontoceti</taxon>
        <taxon>Delphinidae</taxon>
        <taxon>Cephalorhynchus</taxon>
    </lineage>
</organism>
<evidence type="ECO:0000250" key="1"/>
<evidence type="ECO:0000250" key="2">
    <source>
        <dbReference type="UniProtKB" id="P00157"/>
    </source>
</evidence>
<evidence type="ECO:0000255" key="3">
    <source>
        <dbReference type="PROSITE-ProRule" id="PRU00967"/>
    </source>
</evidence>
<evidence type="ECO:0000255" key="4">
    <source>
        <dbReference type="PROSITE-ProRule" id="PRU00968"/>
    </source>
</evidence>